<protein>
    <recommendedName>
        <fullName>Homeobox protein Hox-B7</fullName>
    </recommendedName>
    <alternativeName>
        <fullName>Homeobox protein HHO.C1</fullName>
    </alternativeName>
    <alternativeName>
        <fullName>Homeobox protein Hox-2C</fullName>
    </alternativeName>
</protein>
<organism>
    <name type="scientific">Homo sapiens</name>
    <name type="common">Human</name>
    <dbReference type="NCBI Taxonomy" id="9606"/>
    <lineage>
        <taxon>Eukaryota</taxon>
        <taxon>Metazoa</taxon>
        <taxon>Chordata</taxon>
        <taxon>Craniata</taxon>
        <taxon>Vertebrata</taxon>
        <taxon>Euteleostomi</taxon>
        <taxon>Mammalia</taxon>
        <taxon>Eutheria</taxon>
        <taxon>Euarchontoglires</taxon>
        <taxon>Primates</taxon>
        <taxon>Haplorrhini</taxon>
        <taxon>Catarrhini</taxon>
        <taxon>Hominidae</taxon>
        <taxon>Homo</taxon>
    </lineage>
</organism>
<comment type="function">
    <text>Sequence-specific transcription factor which is part of a developmental regulatory system that provides cells with specific positional identities on the anterior-posterior axis.</text>
</comment>
<comment type="subunit">
    <text evidence="7 8">Forms a DNA-binding heterodimer with transcription factor PBX1.</text>
</comment>
<comment type="interaction">
    <interactant intactId="EBI-1248457">
        <id>P09629</id>
    </interactant>
    <interactant intactId="EBI-745579">
        <id>P49761</id>
        <label>CLK3</label>
    </interactant>
    <organismsDiffer>false</organismsDiffer>
    <experiments>6</experiments>
</comment>
<comment type="interaction">
    <interactant intactId="EBI-1248457">
        <id>P09629</id>
    </interactant>
    <interactant intactId="EBI-10976677">
        <id>G5E9A7</id>
        <label>DMWD</label>
    </interactant>
    <organismsDiffer>false</organismsDiffer>
    <experiments>3</experiments>
</comment>
<comment type="interaction">
    <interactant intactId="EBI-1248457">
        <id>P09629</id>
    </interactant>
    <interactant intactId="EBI-348399">
        <id>P22607</id>
        <label>FGFR3</label>
    </interactant>
    <organismsDiffer>false</organismsDiffer>
    <experiments>3</experiments>
</comment>
<comment type="interaction">
    <interactant intactId="EBI-1248457">
        <id>P09629</id>
    </interactant>
    <interactant intactId="EBI-352053">
        <id>P78527</id>
        <label>PRKDC</label>
    </interactant>
    <organismsDiffer>false</organismsDiffer>
    <experiments>2</experiments>
</comment>
<comment type="interaction">
    <interactant intactId="EBI-1248457">
        <id>P09629</id>
    </interactant>
    <interactant intactId="EBI-5235340">
        <id>Q7Z699</id>
        <label>SPRED1</label>
    </interactant>
    <organismsDiffer>false</organismsDiffer>
    <experiments>3</experiments>
</comment>
<comment type="interaction">
    <interactant intactId="EBI-1248457">
        <id>P09629</id>
    </interactant>
    <interactant intactId="EBI-357997">
        <id>P13010</id>
        <label>XRCC5</label>
    </interactant>
    <organismsDiffer>false</organismsDiffer>
    <experiments>9</experiments>
</comment>
<comment type="subcellular location">
    <subcellularLocation>
        <location>Nucleus</location>
    </subcellularLocation>
</comment>
<comment type="similarity">
    <text evidence="10">Belongs to the Antp homeobox family.</text>
</comment>
<feature type="chain" id="PRO_0000200142" description="Homeobox protein Hox-B7">
    <location>
        <begin position="1"/>
        <end position="217"/>
    </location>
</feature>
<feature type="DNA-binding region" description="Homeobox" evidence="1">
    <location>
        <begin position="137"/>
        <end position="196"/>
    </location>
</feature>
<feature type="region of interest" description="Disordered" evidence="2">
    <location>
        <begin position="194"/>
        <end position="217"/>
    </location>
</feature>
<feature type="short sequence motif" description="Antp-type hexapeptide">
    <location>
        <begin position="126"/>
        <end position="131"/>
    </location>
</feature>
<feature type="sequence variant" id="VAR_058204" description="In dbSNP:rs7406910." evidence="3 4 5 6 9">
    <original>T</original>
    <variation>A</variation>
    <location>
        <position position="9"/>
    </location>
</feature>
<feature type="sequence conflict" description="In Ref. 2; BAF83342 and 3; BAD96969." evidence="10" ref="2 3">
    <original>A</original>
    <variation>V</variation>
    <location>
        <position position="49"/>
    </location>
</feature>
<feature type="sequence conflict" description="In Ref. 1; AAA36003." evidence="10" ref="1">
    <original>A</original>
    <variation>G</variation>
    <location>
        <position position="53"/>
    </location>
</feature>
<feature type="sequence conflict" description="In Ref. 3; BAD96969." evidence="10" ref="3">
    <original>Q</original>
    <variation>L</variation>
    <location>
        <position position="94"/>
    </location>
</feature>
<feature type="sequence conflict" description="In Ref. 7; AAB19469." evidence="10" ref="7">
    <original>A</original>
    <variation>G</variation>
    <location>
        <position position="108"/>
    </location>
</feature>
<feature type="sequence conflict" description="In Ref. 7; AAB19469." evidence="10" ref="7">
    <original>L</original>
    <variation>F</variation>
    <location>
        <position position="118"/>
    </location>
</feature>
<feature type="sequence conflict" description="In Ref. 1; AAA36003." evidence="10" ref="1">
    <original>W</original>
    <variation>S</variation>
    <location>
        <position position="129"/>
    </location>
</feature>
<feature type="sequence conflict" description="In Ref. 3; BAD96969." evidence="10" ref="3">
    <original>E</original>
    <variation>G</variation>
    <location>
        <position position="153"/>
    </location>
</feature>
<feature type="sequence conflict" description="In Ref. 7; AAB19469." evidence="10" ref="7">
    <original>K</original>
    <variation>N</variation>
    <location>
        <position position="154"/>
    </location>
</feature>
<feature type="sequence conflict" description="In Ref. 1; AAA36003 and 7; AAB19469." evidence="10" ref="1 7">
    <original>T</original>
    <variation>A</variation>
    <location>
        <position position="173"/>
    </location>
</feature>
<feature type="sequence conflict" description="In Ref. 7; AAB19469." evidence="10" ref="7">
    <original>K</original>
    <variation>N</variation>
    <location>
        <position position="194"/>
    </location>
</feature>
<feature type="sequence conflict" description="In Ref. 7; AAB19469." evidence="10" ref="7">
    <original>GPG</original>
    <variation>APA</variation>
    <location>
        <begin position="200"/>
        <end position="202"/>
    </location>
</feature>
<reference key="1">
    <citation type="journal article" date="1987" name="Proc. Natl. Acad. Sci. U.S.A.">
        <title>Two human homeobox genes, c1 and c8: structure analysis and expression in embryonic development.</title>
        <authorList>
            <person name="Simeone A."/>
            <person name="Mavilio F."/>
            <person name="Acampora D."/>
            <person name="Giampaolo A."/>
            <person name="Faiella A."/>
            <person name="Zappavigna V."/>
            <person name="D'Esposito M."/>
            <person name="Pannese M."/>
            <person name="Russo G."/>
            <person name="Boncinelli E."/>
            <person name="Peschle C."/>
        </authorList>
    </citation>
    <scope>NUCLEOTIDE SEQUENCE [MRNA]</scope>
    <scope>VARIANT ALA-9</scope>
</reference>
<reference key="2">
    <citation type="journal article" date="2004" name="Nat. Genet.">
        <title>Complete sequencing and characterization of 21,243 full-length human cDNAs.</title>
        <authorList>
            <person name="Ota T."/>
            <person name="Suzuki Y."/>
            <person name="Nishikawa T."/>
            <person name="Otsuki T."/>
            <person name="Sugiyama T."/>
            <person name="Irie R."/>
            <person name="Wakamatsu A."/>
            <person name="Hayashi K."/>
            <person name="Sato H."/>
            <person name="Nagai K."/>
            <person name="Kimura K."/>
            <person name="Makita H."/>
            <person name="Sekine M."/>
            <person name="Obayashi M."/>
            <person name="Nishi T."/>
            <person name="Shibahara T."/>
            <person name="Tanaka T."/>
            <person name="Ishii S."/>
            <person name="Yamamoto J."/>
            <person name="Saito K."/>
            <person name="Kawai Y."/>
            <person name="Isono Y."/>
            <person name="Nakamura Y."/>
            <person name="Nagahari K."/>
            <person name="Murakami K."/>
            <person name="Yasuda T."/>
            <person name="Iwayanagi T."/>
            <person name="Wagatsuma M."/>
            <person name="Shiratori A."/>
            <person name="Sudo H."/>
            <person name="Hosoiri T."/>
            <person name="Kaku Y."/>
            <person name="Kodaira H."/>
            <person name="Kondo H."/>
            <person name="Sugawara M."/>
            <person name="Takahashi M."/>
            <person name="Kanda K."/>
            <person name="Yokoi T."/>
            <person name="Furuya T."/>
            <person name="Kikkawa E."/>
            <person name="Omura Y."/>
            <person name="Abe K."/>
            <person name="Kamihara K."/>
            <person name="Katsuta N."/>
            <person name="Sato K."/>
            <person name="Tanikawa M."/>
            <person name="Yamazaki M."/>
            <person name="Ninomiya K."/>
            <person name="Ishibashi T."/>
            <person name="Yamashita H."/>
            <person name="Murakawa K."/>
            <person name="Fujimori K."/>
            <person name="Tanai H."/>
            <person name="Kimata M."/>
            <person name="Watanabe M."/>
            <person name="Hiraoka S."/>
            <person name="Chiba Y."/>
            <person name="Ishida S."/>
            <person name="Ono Y."/>
            <person name="Takiguchi S."/>
            <person name="Watanabe S."/>
            <person name="Yosida M."/>
            <person name="Hotuta T."/>
            <person name="Kusano J."/>
            <person name="Kanehori K."/>
            <person name="Takahashi-Fujii A."/>
            <person name="Hara H."/>
            <person name="Tanase T.-O."/>
            <person name="Nomura Y."/>
            <person name="Togiya S."/>
            <person name="Komai F."/>
            <person name="Hara R."/>
            <person name="Takeuchi K."/>
            <person name="Arita M."/>
            <person name="Imose N."/>
            <person name="Musashino K."/>
            <person name="Yuuki H."/>
            <person name="Oshima A."/>
            <person name="Sasaki N."/>
            <person name="Aotsuka S."/>
            <person name="Yoshikawa Y."/>
            <person name="Matsunawa H."/>
            <person name="Ichihara T."/>
            <person name="Shiohata N."/>
            <person name="Sano S."/>
            <person name="Moriya S."/>
            <person name="Momiyama H."/>
            <person name="Satoh N."/>
            <person name="Takami S."/>
            <person name="Terashima Y."/>
            <person name="Suzuki O."/>
            <person name="Nakagawa S."/>
            <person name="Senoh A."/>
            <person name="Mizoguchi H."/>
            <person name="Goto Y."/>
            <person name="Shimizu F."/>
            <person name="Wakebe H."/>
            <person name="Hishigaki H."/>
            <person name="Watanabe T."/>
            <person name="Sugiyama A."/>
            <person name="Takemoto M."/>
            <person name="Kawakami B."/>
            <person name="Yamazaki M."/>
            <person name="Watanabe K."/>
            <person name="Kumagai A."/>
            <person name="Itakura S."/>
            <person name="Fukuzumi Y."/>
            <person name="Fujimori Y."/>
            <person name="Komiyama M."/>
            <person name="Tashiro H."/>
            <person name="Tanigami A."/>
            <person name="Fujiwara T."/>
            <person name="Ono T."/>
            <person name="Yamada K."/>
            <person name="Fujii Y."/>
            <person name="Ozaki K."/>
            <person name="Hirao M."/>
            <person name="Ohmori Y."/>
            <person name="Kawabata A."/>
            <person name="Hikiji T."/>
            <person name="Kobatake N."/>
            <person name="Inagaki H."/>
            <person name="Ikema Y."/>
            <person name="Okamoto S."/>
            <person name="Okitani R."/>
            <person name="Kawakami T."/>
            <person name="Noguchi S."/>
            <person name="Itoh T."/>
            <person name="Shigeta K."/>
            <person name="Senba T."/>
            <person name="Matsumura K."/>
            <person name="Nakajima Y."/>
            <person name="Mizuno T."/>
            <person name="Morinaga M."/>
            <person name="Sasaki M."/>
            <person name="Togashi T."/>
            <person name="Oyama M."/>
            <person name="Hata H."/>
            <person name="Watanabe M."/>
            <person name="Komatsu T."/>
            <person name="Mizushima-Sugano J."/>
            <person name="Satoh T."/>
            <person name="Shirai Y."/>
            <person name="Takahashi Y."/>
            <person name="Nakagawa K."/>
            <person name="Okumura K."/>
            <person name="Nagase T."/>
            <person name="Nomura N."/>
            <person name="Kikuchi H."/>
            <person name="Masuho Y."/>
            <person name="Yamashita R."/>
            <person name="Nakai K."/>
            <person name="Yada T."/>
            <person name="Nakamura Y."/>
            <person name="Ohara O."/>
            <person name="Isogai T."/>
            <person name="Sugano S."/>
        </authorList>
    </citation>
    <scope>NUCLEOTIDE SEQUENCE [LARGE SCALE MRNA]</scope>
    <scope>VARIANT ALA-9</scope>
    <source>
        <tissue>Embryo</tissue>
    </source>
</reference>
<reference key="3">
    <citation type="submission" date="2005-04" db="EMBL/GenBank/DDBJ databases">
        <authorList>
            <person name="Suzuki Y."/>
            <person name="Sugano S."/>
            <person name="Totoki Y."/>
            <person name="Toyoda A."/>
            <person name="Takeda T."/>
            <person name="Sakaki Y."/>
            <person name="Tanaka A."/>
            <person name="Yokoyama S."/>
        </authorList>
    </citation>
    <scope>NUCLEOTIDE SEQUENCE [LARGE SCALE MRNA]</scope>
    <scope>VARIANT ALA-9</scope>
    <source>
        <tissue>Gastric mucosa</tissue>
    </source>
</reference>
<reference key="4">
    <citation type="journal article" date="2006" name="Nature">
        <title>DNA sequence of human chromosome 17 and analysis of rearrangement in the human lineage.</title>
        <authorList>
            <person name="Zody M.C."/>
            <person name="Garber M."/>
            <person name="Adams D.J."/>
            <person name="Sharpe T."/>
            <person name="Harrow J."/>
            <person name="Lupski J.R."/>
            <person name="Nicholson C."/>
            <person name="Searle S.M."/>
            <person name="Wilming L."/>
            <person name="Young S.K."/>
            <person name="Abouelleil A."/>
            <person name="Allen N.R."/>
            <person name="Bi W."/>
            <person name="Bloom T."/>
            <person name="Borowsky M.L."/>
            <person name="Bugalter B.E."/>
            <person name="Butler J."/>
            <person name="Chang J.L."/>
            <person name="Chen C.-K."/>
            <person name="Cook A."/>
            <person name="Corum B."/>
            <person name="Cuomo C.A."/>
            <person name="de Jong P.J."/>
            <person name="DeCaprio D."/>
            <person name="Dewar K."/>
            <person name="FitzGerald M."/>
            <person name="Gilbert J."/>
            <person name="Gibson R."/>
            <person name="Gnerre S."/>
            <person name="Goldstein S."/>
            <person name="Grafham D.V."/>
            <person name="Grocock R."/>
            <person name="Hafez N."/>
            <person name="Hagopian D.S."/>
            <person name="Hart E."/>
            <person name="Norman C.H."/>
            <person name="Humphray S."/>
            <person name="Jaffe D.B."/>
            <person name="Jones M."/>
            <person name="Kamal M."/>
            <person name="Khodiyar V.K."/>
            <person name="LaButti K."/>
            <person name="Laird G."/>
            <person name="Lehoczky J."/>
            <person name="Liu X."/>
            <person name="Lokyitsang T."/>
            <person name="Loveland J."/>
            <person name="Lui A."/>
            <person name="Macdonald P."/>
            <person name="Major J.E."/>
            <person name="Matthews L."/>
            <person name="Mauceli E."/>
            <person name="McCarroll S.A."/>
            <person name="Mihalev A.H."/>
            <person name="Mudge J."/>
            <person name="Nguyen C."/>
            <person name="Nicol R."/>
            <person name="O'Leary S.B."/>
            <person name="Osoegawa K."/>
            <person name="Schwartz D.C."/>
            <person name="Shaw-Smith C."/>
            <person name="Stankiewicz P."/>
            <person name="Steward C."/>
            <person name="Swarbreck D."/>
            <person name="Venkataraman V."/>
            <person name="Whittaker C.A."/>
            <person name="Yang X."/>
            <person name="Zimmer A.R."/>
            <person name="Bradley A."/>
            <person name="Hubbard T."/>
            <person name="Birren B.W."/>
            <person name="Rogers J."/>
            <person name="Lander E.S."/>
            <person name="Nusbaum C."/>
        </authorList>
    </citation>
    <scope>NUCLEOTIDE SEQUENCE [LARGE SCALE GENOMIC DNA]</scope>
    <scope>VARIANT ALA-9</scope>
</reference>
<reference key="5">
    <citation type="submission" date="2005-09" db="EMBL/GenBank/DDBJ databases">
        <authorList>
            <person name="Mural R.J."/>
            <person name="Istrail S."/>
            <person name="Sutton G.G."/>
            <person name="Florea L."/>
            <person name="Halpern A.L."/>
            <person name="Mobarry C.M."/>
            <person name="Lippert R."/>
            <person name="Walenz B."/>
            <person name="Shatkay H."/>
            <person name="Dew I."/>
            <person name="Miller J.R."/>
            <person name="Flanigan M.J."/>
            <person name="Edwards N.J."/>
            <person name="Bolanos R."/>
            <person name="Fasulo D."/>
            <person name="Halldorsson B.V."/>
            <person name="Hannenhalli S."/>
            <person name="Turner R."/>
            <person name="Yooseph S."/>
            <person name="Lu F."/>
            <person name="Nusskern D.R."/>
            <person name="Shue B.C."/>
            <person name="Zheng X.H."/>
            <person name="Zhong F."/>
            <person name="Delcher A.L."/>
            <person name="Huson D.H."/>
            <person name="Kravitz S.A."/>
            <person name="Mouchard L."/>
            <person name="Reinert K."/>
            <person name="Remington K.A."/>
            <person name="Clark A.G."/>
            <person name="Waterman M.S."/>
            <person name="Eichler E.E."/>
            <person name="Adams M.D."/>
            <person name="Hunkapiller M.W."/>
            <person name="Myers E.W."/>
            <person name="Venter J.C."/>
        </authorList>
    </citation>
    <scope>NUCLEOTIDE SEQUENCE [LARGE SCALE GENOMIC DNA]</scope>
</reference>
<reference key="6">
    <citation type="journal article" date="2004" name="Genome Res.">
        <title>The status, quality, and expansion of the NIH full-length cDNA project: the Mammalian Gene Collection (MGC).</title>
        <authorList>
            <consortium name="The MGC Project Team"/>
        </authorList>
    </citation>
    <scope>NUCLEOTIDE SEQUENCE [LARGE SCALE MRNA]</scope>
    <scope>VARIANT ALA-9</scope>
    <source>
        <tissue>Liver</tissue>
    </source>
</reference>
<reference key="7">
    <citation type="journal article" date="1991" name="Blood">
        <title>Lymphoid expression and TATAA binding of a human protein containing an Antennapedia homeodomain.</title>
        <authorList>
            <person name="Baier L.J."/>
            <person name="Hannibal M.C."/>
            <person name="Hanley E.W."/>
            <person name="Nabel G.J."/>
        </authorList>
    </citation>
    <scope>NUCLEOTIDE SEQUENCE [MRNA] OF 98-217</scope>
</reference>
<reference key="8">
    <citation type="journal article" date="1989" name="Proc. Natl. Acad. Sci. U.S.A.">
        <title>Lineage-restricted expression of homeobox-containing genes in human hematopoietic cell lines.</title>
        <authorList>
            <person name="Shen W.-F."/>
            <person name="Largman C."/>
            <person name="Lowney P."/>
            <person name="Corral J.C."/>
            <person name="Detmer K."/>
            <person name="Hauser C.A."/>
            <person name="Simonitch T.A."/>
            <person name="Hack F.M."/>
            <person name="Lawrence H.J."/>
        </authorList>
    </citation>
    <scope>NUCLEOTIDE SEQUENCE [MRNA] OF 119-217</scope>
</reference>
<reference key="9">
    <citation type="journal article" date="1989" name="Genome">
        <title>Organization of human class I homeobox genes.</title>
        <authorList>
            <person name="Boncinelli E."/>
            <person name="Acampora D."/>
            <person name="Pannese M."/>
            <person name="D'Esposito M."/>
            <person name="Somma R."/>
            <person name="Gaudino G."/>
            <person name="Stornaiuolo A."/>
            <person name="Cafiero M."/>
            <person name="Faiella A."/>
            <person name="Simeone A."/>
        </authorList>
    </citation>
    <scope>NUCLEOTIDE SEQUENCE [GENOMIC DNA] OF 137-202</scope>
</reference>
<reference key="10">
    <citation type="journal article" date="1995" name="Mol. Cell. Biol.">
        <title>Both Pbx1 and E2A-Pbx1 bind the DNA motif ATCAATCAA cooperatively with the products of multiple murine Hox genes, some of which are themselves oncogenes.</title>
        <authorList>
            <person name="Lu Q."/>
            <person name="Knoepfler P.S."/>
            <person name="Scheele J."/>
            <person name="Wright D.D."/>
            <person name="Kamps M.P."/>
        </authorList>
    </citation>
    <scope>INTERACTION WITH PBX1</scope>
</reference>
<reference key="11">
    <citation type="journal article" date="1997" name="Oncogene">
        <title>The highest affinity DNA element bound by Pbx complexes in t(1;19) leukemic cells fails to mediate cooperative DNA-binding or cooperative transactivation by E2a-Pbx1 and class I Hox proteins - evidence for selective targetting of E2a-Pbx1 to a subset of Pbx-recognition elements.</title>
        <authorList>
            <person name="Knoepfler P.S."/>
            <person name="Kamps M.P."/>
        </authorList>
    </citation>
    <scope>INTERACTION WITH PBX1</scope>
</reference>
<name>HXB7_HUMAN</name>
<gene>
    <name type="primary">HOXB7</name>
    <name type="synonym">HOX2C</name>
</gene>
<accession>P09629</accession>
<accession>A8K3N8</accession>
<accession>Q15957</accession>
<accession>Q53FN3</accession>
<accession>Q96BQ6</accession>
<dbReference type="EMBL" id="M16937">
    <property type="protein sequence ID" value="AAA36003.1"/>
    <property type="molecule type" value="mRNA"/>
</dbReference>
<dbReference type="EMBL" id="AK290653">
    <property type="protein sequence ID" value="BAF83342.1"/>
    <property type="molecule type" value="mRNA"/>
</dbReference>
<dbReference type="EMBL" id="AK223249">
    <property type="protein sequence ID" value="BAD96969.1"/>
    <property type="molecule type" value="mRNA"/>
</dbReference>
<dbReference type="EMBL" id="AC103702">
    <property type="status" value="NOT_ANNOTATED_CDS"/>
    <property type="molecule type" value="mRNA"/>
</dbReference>
<dbReference type="EMBL" id="CH471109">
    <property type="protein sequence ID" value="EAW94725.1"/>
    <property type="molecule type" value="Genomic_DNA"/>
</dbReference>
<dbReference type="EMBL" id="BC015345">
    <property type="protein sequence ID" value="AAH15345.1"/>
    <property type="molecule type" value="mRNA"/>
</dbReference>
<dbReference type="EMBL" id="S49765">
    <property type="protein sequence ID" value="AAB19469.2"/>
    <property type="molecule type" value="mRNA"/>
</dbReference>
<dbReference type="EMBL" id="M30598">
    <property type="protein sequence ID" value="AAA36005.1"/>
    <property type="molecule type" value="mRNA"/>
</dbReference>
<dbReference type="CCDS" id="CCDS11532.1"/>
<dbReference type="PIR" id="A28030">
    <property type="entry name" value="WJHU2C"/>
</dbReference>
<dbReference type="RefSeq" id="NP_004493.3">
    <property type="nucleotide sequence ID" value="NM_004502.3"/>
</dbReference>
<dbReference type="SMR" id="P09629"/>
<dbReference type="BioGRID" id="109457">
    <property type="interactions" value="21"/>
</dbReference>
<dbReference type="CORUM" id="P09629"/>
<dbReference type="ELM" id="P09629"/>
<dbReference type="FunCoup" id="P09629">
    <property type="interactions" value="1446"/>
</dbReference>
<dbReference type="IntAct" id="P09629">
    <property type="interactions" value="16"/>
</dbReference>
<dbReference type="STRING" id="9606.ENSP00000239165"/>
<dbReference type="GlyGen" id="P09629">
    <property type="glycosylation" value="1 site, 1 O-linked glycan (1 site)"/>
</dbReference>
<dbReference type="iPTMnet" id="P09629"/>
<dbReference type="PhosphoSitePlus" id="P09629"/>
<dbReference type="BioMuta" id="HOXB7"/>
<dbReference type="DMDM" id="311033482"/>
<dbReference type="jPOST" id="P09629"/>
<dbReference type="MassIVE" id="P09629"/>
<dbReference type="PaxDb" id="9606-ENSP00000239165"/>
<dbReference type="PeptideAtlas" id="P09629"/>
<dbReference type="ProteomicsDB" id="52255"/>
<dbReference type="Pumba" id="P09629"/>
<dbReference type="Antibodypedia" id="68878">
    <property type="antibodies" value="363 antibodies from 32 providers"/>
</dbReference>
<dbReference type="DNASU" id="3217"/>
<dbReference type="Ensembl" id="ENST00000239165.9">
    <property type="protein sequence ID" value="ENSP00000239165.7"/>
    <property type="gene ID" value="ENSG00000260027.5"/>
</dbReference>
<dbReference type="GeneID" id="3217"/>
<dbReference type="KEGG" id="hsa:3217"/>
<dbReference type="MANE-Select" id="ENST00000239165.9">
    <property type="protein sequence ID" value="ENSP00000239165.7"/>
    <property type="RefSeq nucleotide sequence ID" value="NM_004502.4"/>
    <property type="RefSeq protein sequence ID" value="NP_004493.3"/>
</dbReference>
<dbReference type="UCSC" id="uc002inv.4">
    <property type="organism name" value="human"/>
</dbReference>
<dbReference type="AGR" id="HGNC:5118"/>
<dbReference type="CTD" id="3217"/>
<dbReference type="DisGeNET" id="3217"/>
<dbReference type="GeneCards" id="HOXB7"/>
<dbReference type="HGNC" id="HGNC:5118">
    <property type="gene designation" value="HOXB7"/>
</dbReference>
<dbReference type="HPA" id="ENSG00000260027">
    <property type="expression patterns" value="Tissue enriched (epididymis)"/>
</dbReference>
<dbReference type="MIM" id="142962">
    <property type="type" value="gene"/>
</dbReference>
<dbReference type="neXtProt" id="NX_P09629"/>
<dbReference type="OpenTargets" id="ENSG00000260027"/>
<dbReference type="VEuPathDB" id="HostDB:ENSG00000260027"/>
<dbReference type="eggNOG" id="KOG0489">
    <property type="taxonomic scope" value="Eukaryota"/>
</dbReference>
<dbReference type="GeneTree" id="ENSGT00940000161230"/>
<dbReference type="HOGENOM" id="CLU_061398_1_1_1"/>
<dbReference type="InParanoid" id="P09629"/>
<dbReference type="OMA" id="QNCNKTD"/>
<dbReference type="OrthoDB" id="6159439at2759"/>
<dbReference type="PAN-GO" id="P09629">
    <property type="GO annotations" value="5 GO annotations based on evolutionary models"/>
</dbReference>
<dbReference type="PhylomeDB" id="P09629"/>
<dbReference type="TreeFam" id="TF316310"/>
<dbReference type="PathwayCommons" id="P09629"/>
<dbReference type="SignaLink" id="P09629"/>
<dbReference type="SIGNOR" id="P09629"/>
<dbReference type="BioGRID-ORCS" id="3217">
    <property type="hits" value="14 hits in 1175 CRISPR screens"/>
</dbReference>
<dbReference type="GeneWiki" id="HOXB7"/>
<dbReference type="GenomeRNAi" id="3217"/>
<dbReference type="Pharos" id="P09629">
    <property type="development level" value="Tbio"/>
</dbReference>
<dbReference type="PRO" id="PR:P09629"/>
<dbReference type="Proteomes" id="UP000005640">
    <property type="component" value="Chromosome 17"/>
</dbReference>
<dbReference type="RNAct" id="P09629">
    <property type="molecule type" value="protein"/>
</dbReference>
<dbReference type="Bgee" id="ENSG00000260027">
    <property type="expression patterns" value="Expressed in corpus epididymis and 152 other cell types or tissues"/>
</dbReference>
<dbReference type="GO" id="GO:0000785">
    <property type="term" value="C:chromatin"/>
    <property type="evidence" value="ECO:0000247"/>
    <property type="project" value="NTNU_SB"/>
</dbReference>
<dbReference type="GO" id="GO:0005829">
    <property type="term" value="C:cytosol"/>
    <property type="evidence" value="ECO:0000314"/>
    <property type="project" value="HPA"/>
</dbReference>
<dbReference type="GO" id="GO:0016604">
    <property type="term" value="C:nuclear body"/>
    <property type="evidence" value="ECO:0000314"/>
    <property type="project" value="HPA"/>
</dbReference>
<dbReference type="GO" id="GO:0005654">
    <property type="term" value="C:nucleoplasm"/>
    <property type="evidence" value="ECO:0000314"/>
    <property type="project" value="HPA"/>
</dbReference>
<dbReference type="GO" id="GO:0005634">
    <property type="term" value="C:nucleus"/>
    <property type="evidence" value="ECO:0000318"/>
    <property type="project" value="GO_Central"/>
</dbReference>
<dbReference type="GO" id="GO:0001228">
    <property type="term" value="F:DNA-binding transcription activator activity, RNA polymerase II-specific"/>
    <property type="evidence" value="ECO:0000314"/>
    <property type="project" value="NTNU_SB"/>
</dbReference>
<dbReference type="GO" id="GO:0003700">
    <property type="term" value="F:DNA-binding transcription factor activity"/>
    <property type="evidence" value="ECO:0000303"/>
    <property type="project" value="UniProtKB"/>
</dbReference>
<dbReference type="GO" id="GO:0000981">
    <property type="term" value="F:DNA-binding transcription factor activity, RNA polymerase II-specific"/>
    <property type="evidence" value="ECO:0000247"/>
    <property type="project" value="NTNU_SB"/>
</dbReference>
<dbReference type="GO" id="GO:0000978">
    <property type="term" value="F:RNA polymerase II cis-regulatory region sequence-specific DNA binding"/>
    <property type="evidence" value="ECO:0000314"/>
    <property type="project" value="NTNU_SB"/>
</dbReference>
<dbReference type="GO" id="GO:1990837">
    <property type="term" value="F:sequence-specific double-stranded DNA binding"/>
    <property type="evidence" value="ECO:0000314"/>
    <property type="project" value="ARUK-UCL"/>
</dbReference>
<dbReference type="GO" id="GO:0009952">
    <property type="term" value="P:anterior/posterior pattern specification"/>
    <property type="evidence" value="ECO:0000318"/>
    <property type="project" value="GO_Central"/>
</dbReference>
<dbReference type="GO" id="GO:0048568">
    <property type="term" value="P:embryonic organ development"/>
    <property type="evidence" value="ECO:0000270"/>
    <property type="project" value="UniProtKB"/>
</dbReference>
<dbReference type="GO" id="GO:0048704">
    <property type="term" value="P:embryonic skeletal system morphogenesis"/>
    <property type="evidence" value="ECO:0007669"/>
    <property type="project" value="Ensembl"/>
</dbReference>
<dbReference type="GO" id="GO:0030099">
    <property type="term" value="P:myeloid cell differentiation"/>
    <property type="evidence" value="ECO:0007669"/>
    <property type="project" value="Ensembl"/>
</dbReference>
<dbReference type="GO" id="GO:0090190">
    <property type="term" value="P:positive regulation of branching involved in ureteric bud morphogenesis"/>
    <property type="evidence" value="ECO:0007669"/>
    <property type="project" value="Ensembl"/>
</dbReference>
<dbReference type="GO" id="GO:0045944">
    <property type="term" value="P:positive regulation of transcription by RNA polymerase II"/>
    <property type="evidence" value="ECO:0000314"/>
    <property type="project" value="NTNU_SB"/>
</dbReference>
<dbReference type="GO" id="GO:0006355">
    <property type="term" value="P:regulation of DNA-templated transcription"/>
    <property type="evidence" value="ECO:0000303"/>
    <property type="project" value="UniProtKB"/>
</dbReference>
<dbReference type="GO" id="GO:0006357">
    <property type="term" value="P:regulation of transcription by RNA polymerase II"/>
    <property type="evidence" value="ECO:0000318"/>
    <property type="project" value="GO_Central"/>
</dbReference>
<dbReference type="CDD" id="cd00086">
    <property type="entry name" value="homeodomain"/>
    <property type="match status" value="1"/>
</dbReference>
<dbReference type="FunFam" id="1.10.10.60:FF:000017">
    <property type="entry name" value="Homeobox protein antennapedia"/>
    <property type="match status" value="1"/>
</dbReference>
<dbReference type="Gene3D" id="1.10.10.60">
    <property type="entry name" value="Homeodomain-like"/>
    <property type="match status" value="1"/>
</dbReference>
<dbReference type="InterPro" id="IPR050296">
    <property type="entry name" value="Antp_homeobox"/>
</dbReference>
<dbReference type="InterPro" id="IPR001356">
    <property type="entry name" value="HD"/>
</dbReference>
<dbReference type="InterPro" id="IPR020479">
    <property type="entry name" value="HD_metazoa"/>
</dbReference>
<dbReference type="InterPro" id="IPR017995">
    <property type="entry name" value="Homeobox_antennapedia"/>
</dbReference>
<dbReference type="InterPro" id="IPR001827">
    <property type="entry name" value="Homeobox_Antennapedia_CS"/>
</dbReference>
<dbReference type="InterPro" id="IPR017970">
    <property type="entry name" value="Homeobox_CS"/>
</dbReference>
<dbReference type="InterPro" id="IPR009057">
    <property type="entry name" value="Homeodomain-like_sf"/>
</dbReference>
<dbReference type="PANTHER" id="PTHR45659">
    <property type="entry name" value="HOMEOBOX PROTEIN HOX"/>
    <property type="match status" value="1"/>
</dbReference>
<dbReference type="PANTHER" id="PTHR45659:SF11">
    <property type="entry name" value="HOMEOBOX PROTEIN HOX-B7"/>
    <property type="match status" value="1"/>
</dbReference>
<dbReference type="Pfam" id="PF00046">
    <property type="entry name" value="Homeodomain"/>
    <property type="match status" value="1"/>
</dbReference>
<dbReference type="PRINTS" id="PR00025">
    <property type="entry name" value="ANTENNAPEDIA"/>
</dbReference>
<dbReference type="PRINTS" id="PR00024">
    <property type="entry name" value="HOMEOBOX"/>
</dbReference>
<dbReference type="SMART" id="SM00389">
    <property type="entry name" value="HOX"/>
    <property type="match status" value="1"/>
</dbReference>
<dbReference type="SUPFAM" id="SSF46689">
    <property type="entry name" value="Homeodomain-like"/>
    <property type="match status" value="1"/>
</dbReference>
<dbReference type="PROSITE" id="PS00032">
    <property type="entry name" value="ANTENNAPEDIA"/>
    <property type="match status" value="1"/>
</dbReference>
<dbReference type="PROSITE" id="PS00027">
    <property type="entry name" value="HOMEOBOX_1"/>
    <property type="match status" value="1"/>
</dbReference>
<dbReference type="PROSITE" id="PS50071">
    <property type="entry name" value="HOMEOBOX_2"/>
    <property type="match status" value="1"/>
</dbReference>
<evidence type="ECO:0000255" key="1">
    <source>
        <dbReference type="PROSITE-ProRule" id="PRU00108"/>
    </source>
</evidence>
<evidence type="ECO:0000256" key="2">
    <source>
        <dbReference type="SAM" id="MobiDB-lite"/>
    </source>
</evidence>
<evidence type="ECO:0000269" key="3">
    <source>
    </source>
</evidence>
<evidence type="ECO:0000269" key="4">
    <source>
    </source>
</evidence>
<evidence type="ECO:0000269" key="5">
    <source>
    </source>
</evidence>
<evidence type="ECO:0000269" key="6">
    <source>
    </source>
</evidence>
<evidence type="ECO:0000269" key="7">
    <source>
    </source>
</evidence>
<evidence type="ECO:0000269" key="8">
    <source>
    </source>
</evidence>
<evidence type="ECO:0000269" key="9">
    <source ref="3"/>
</evidence>
<evidence type="ECO:0000305" key="10"/>
<proteinExistence type="evidence at protein level"/>
<sequence>MSSLYYANTLFSKYPASSSVFATGAFPEQTSCAFASNPQRPGYGAGSGASFAASMQGLYPGGGGMAGQSAAGVYAAGYGLEPSSFNMHCAPFEQNLSGVCPGDSAKAAGAKEQRDSDLAAESNFRIYPWMRSSGTDRKRGRQTYTRYQTLELEKEFHYNRYLTRRRRIEIAHTLCLTERQIKIWFQNRRMKWKKENKTAGPGTTGQDRAEAEEEEEE</sequence>
<keyword id="KW-0217">Developmental protein</keyword>
<keyword id="KW-0238">DNA-binding</keyword>
<keyword id="KW-0371">Homeobox</keyword>
<keyword id="KW-0539">Nucleus</keyword>
<keyword id="KW-1267">Proteomics identification</keyword>
<keyword id="KW-1185">Reference proteome</keyword>
<keyword id="KW-0804">Transcription</keyword>
<keyword id="KW-0805">Transcription regulation</keyword>